<gene>
    <name type="primary">LOT5</name>
    <name type="ordered locus">YKL183W</name>
</gene>
<keyword id="KW-0963">Cytoplasm</keyword>
<keyword id="KW-0539">Nucleus</keyword>
<keyword id="KW-1185">Reference proteome</keyword>
<comment type="subcellular location">
    <subcellularLocation>
        <location evidence="2">Cytoplasm</location>
    </subcellularLocation>
    <subcellularLocation>
        <location evidence="2">Nucleus</location>
    </subcellularLocation>
</comment>
<comment type="induction">
    <text evidence="1">By cold.</text>
</comment>
<comment type="miscellaneous">
    <text evidence="3">Present with 5930 molecules/cell in log phase SD medium.</text>
</comment>
<comment type="similarity">
    <text evidence="4">Belongs to the LOT5 family.</text>
</comment>
<name>LOT5_YEAST</name>
<protein>
    <recommendedName>
        <fullName>Protein LOT5</fullName>
    </recommendedName>
    <alternativeName>
        <fullName>Low temperature-responsive protein 5</fullName>
    </alternativeName>
</protein>
<accession>P34234</accession>
<accession>D6VX18</accession>
<proteinExistence type="evidence at protein level"/>
<reference key="1">
    <citation type="journal article" date="1993" name="Yeast">
        <title>Sequencing and analysis of 51.6 kilobases on the left arm of chromosome XI from Saccharomyces cerevisiae reveals 23 open reading frames including the FAS1 gene.</title>
        <authorList>
            <person name="Wiemann S."/>
            <person name="Voss H."/>
            <person name="Schwager C."/>
            <person name="Rupp T."/>
            <person name="Stegemann J."/>
            <person name="Zimmermann J."/>
            <person name="Grothues D."/>
            <person name="Sensen C."/>
            <person name="Erfle H."/>
            <person name="Hewitt N."/>
            <person name="Banrevi A."/>
            <person name="Ansorge W."/>
        </authorList>
    </citation>
    <scope>NUCLEOTIDE SEQUENCE [GENOMIC DNA]</scope>
</reference>
<reference key="2">
    <citation type="journal article" date="1994" name="Nature">
        <title>Complete DNA sequence of yeast chromosome XI.</title>
        <authorList>
            <person name="Dujon B."/>
            <person name="Alexandraki D."/>
            <person name="Andre B."/>
            <person name="Ansorge W."/>
            <person name="Baladron V."/>
            <person name="Ballesta J.P.G."/>
            <person name="Banrevi A."/>
            <person name="Bolle P.-A."/>
            <person name="Bolotin-Fukuhara M."/>
            <person name="Bossier P."/>
            <person name="Bou G."/>
            <person name="Boyer J."/>
            <person name="Buitrago M.J."/>
            <person name="Cheret G."/>
            <person name="Colleaux L."/>
            <person name="Daignan-Fornier B."/>
            <person name="del Rey F."/>
            <person name="Dion C."/>
            <person name="Domdey H."/>
            <person name="Duesterhoeft A."/>
            <person name="Duesterhus S."/>
            <person name="Entian K.-D."/>
            <person name="Erfle H."/>
            <person name="Esteban P.F."/>
            <person name="Feldmann H."/>
            <person name="Fernandes L."/>
            <person name="Fobo G.M."/>
            <person name="Fritz C."/>
            <person name="Fukuhara H."/>
            <person name="Gabel C."/>
            <person name="Gaillon L."/>
            <person name="Garcia-Cantalejo J.M."/>
            <person name="Garcia-Ramirez J.J."/>
            <person name="Gent M.E."/>
            <person name="Ghazvini M."/>
            <person name="Goffeau A."/>
            <person name="Gonzalez A."/>
            <person name="Grothues D."/>
            <person name="Guerreiro P."/>
            <person name="Hegemann J.H."/>
            <person name="Hewitt N."/>
            <person name="Hilger F."/>
            <person name="Hollenberg C.P."/>
            <person name="Horaitis O."/>
            <person name="Indge K.J."/>
            <person name="Jacquier A."/>
            <person name="James C.M."/>
            <person name="Jauniaux J.-C."/>
            <person name="Jimenez A."/>
            <person name="Keuchel H."/>
            <person name="Kirchrath L."/>
            <person name="Kleine K."/>
            <person name="Koetter P."/>
            <person name="Legrain P."/>
            <person name="Liebl S."/>
            <person name="Louis E.J."/>
            <person name="Maia e Silva A."/>
            <person name="Marck C."/>
            <person name="Monnier A.-L."/>
            <person name="Moestl D."/>
            <person name="Mueller S."/>
            <person name="Obermaier B."/>
            <person name="Oliver S.G."/>
            <person name="Pallier C."/>
            <person name="Pascolo S."/>
            <person name="Pfeiffer F."/>
            <person name="Philippsen P."/>
            <person name="Planta R.J."/>
            <person name="Pohl F.M."/>
            <person name="Pohl T.M."/>
            <person name="Poehlmann R."/>
            <person name="Portetelle D."/>
            <person name="Purnelle B."/>
            <person name="Puzos V."/>
            <person name="Ramezani Rad M."/>
            <person name="Rasmussen S.W."/>
            <person name="Remacha M.A."/>
            <person name="Revuelta J.L."/>
            <person name="Richard G.-F."/>
            <person name="Rieger M."/>
            <person name="Rodrigues-Pousada C."/>
            <person name="Rose M."/>
            <person name="Rupp T."/>
            <person name="Santos M.A."/>
            <person name="Schwager C."/>
            <person name="Sensen C."/>
            <person name="Skala J."/>
            <person name="Soares H."/>
            <person name="Sor F."/>
            <person name="Stegemann J."/>
            <person name="Tettelin H."/>
            <person name="Thierry A."/>
            <person name="Tzermia M."/>
            <person name="Urrestarazu L.A."/>
            <person name="van Dyck L."/>
            <person name="van Vliet-Reedijk J.C."/>
            <person name="Valens M."/>
            <person name="Vandenbol M."/>
            <person name="Vilela C."/>
            <person name="Vissers S."/>
            <person name="von Wettstein D."/>
            <person name="Voss H."/>
            <person name="Wiemann S."/>
            <person name="Xu G."/>
            <person name="Zimmermann J."/>
            <person name="Haasemann M."/>
            <person name="Becker I."/>
            <person name="Mewes H.-W."/>
        </authorList>
    </citation>
    <scope>NUCLEOTIDE SEQUENCE [LARGE SCALE GENOMIC DNA]</scope>
    <source>
        <strain>ATCC 204508 / S288c</strain>
    </source>
</reference>
<reference key="3">
    <citation type="journal article" date="2014" name="G3 (Bethesda)">
        <title>The reference genome sequence of Saccharomyces cerevisiae: Then and now.</title>
        <authorList>
            <person name="Engel S.R."/>
            <person name="Dietrich F.S."/>
            <person name="Fisk D.G."/>
            <person name="Binkley G."/>
            <person name="Balakrishnan R."/>
            <person name="Costanzo M.C."/>
            <person name="Dwight S.S."/>
            <person name="Hitz B.C."/>
            <person name="Karra K."/>
            <person name="Nash R.S."/>
            <person name="Weng S."/>
            <person name="Wong E.D."/>
            <person name="Lloyd P."/>
            <person name="Skrzypek M.S."/>
            <person name="Miyasato S.R."/>
            <person name="Simison M."/>
            <person name="Cherry J.M."/>
        </authorList>
    </citation>
    <scope>GENOME REANNOTATION</scope>
    <source>
        <strain>ATCC 204508 / S288c</strain>
    </source>
</reference>
<reference key="4">
    <citation type="journal article" date="2001" name="Biochem. Biophys. Res. Commun.">
        <title>Multiple mechanisms regulate expression of low temperature responsive (LOT) genes in Saccharomyces cerevisiae.</title>
        <authorList>
            <person name="Zhang L."/>
            <person name="Ohta A."/>
            <person name="Horiuchi H."/>
            <person name="Takagi M."/>
            <person name="Imai R."/>
        </authorList>
    </citation>
    <scope>INDUCTION</scope>
</reference>
<reference key="5">
    <citation type="journal article" date="2003" name="Nature">
        <title>Global analysis of protein localization in budding yeast.</title>
        <authorList>
            <person name="Huh W.-K."/>
            <person name="Falvo J.V."/>
            <person name="Gerke L.C."/>
            <person name="Carroll A.S."/>
            <person name="Howson R.W."/>
            <person name="Weissman J.S."/>
            <person name="O'Shea E.K."/>
        </authorList>
    </citation>
    <scope>SUBCELLULAR LOCATION [LARGE SCALE ANALYSIS]</scope>
</reference>
<reference key="6">
    <citation type="journal article" date="2003" name="Nature">
        <title>Global analysis of protein expression in yeast.</title>
        <authorList>
            <person name="Ghaemmaghami S."/>
            <person name="Huh W.-K."/>
            <person name="Bower K."/>
            <person name="Howson R.W."/>
            <person name="Belle A."/>
            <person name="Dephoure N."/>
            <person name="O'Shea E.K."/>
            <person name="Weissman J.S."/>
        </authorList>
    </citation>
    <scope>LEVEL OF PROTEIN EXPRESSION [LARGE SCALE ANALYSIS]</scope>
</reference>
<dbReference type="EMBL" id="X74151">
    <property type="protein sequence ID" value="CAA52255.1"/>
    <property type="molecule type" value="Genomic_DNA"/>
</dbReference>
<dbReference type="EMBL" id="Z28183">
    <property type="protein sequence ID" value="CAA82026.1"/>
    <property type="molecule type" value="Genomic_DNA"/>
</dbReference>
<dbReference type="EMBL" id="BK006944">
    <property type="protein sequence ID" value="DAA08984.1"/>
    <property type="molecule type" value="Genomic_DNA"/>
</dbReference>
<dbReference type="PIR" id="S34687">
    <property type="entry name" value="S34687"/>
</dbReference>
<dbReference type="RefSeq" id="NP_012738.1">
    <property type="nucleotide sequence ID" value="NM_001179749.1"/>
</dbReference>
<dbReference type="BioGRID" id="33939">
    <property type="interactions" value="31"/>
</dbReference>
<dbReference type="DIP" id="DIP-1413N"/>
<dbReference type="FunCoup" id="P34234">
    <property type="interactions" value="65"/>
</dbReference>
<dbReference type="IntAct" id="P34234">
    <property type="interactions" value="3"/>
</dbReference>
<dbReference type="MINT" id="P34234"/>
<dbReference type="STRING" id="4932.YKL183W"/>
<dbReference type="PaxDb" id="4932-YKL183W"/>
<dbReference type="PeptideAtlas" id="P34234"/>
<dbReference type="EnsemblFungi" id="YKL183W_mRNA">
    <property type="protein sequence ID" value="YKL183W"/>
    <property type="gene ID" value="YKL183W"/>
</dbReference>
<dbReference type="GeneID" id="853652"/>
<dbReference type="KEGG" id="sce:YKL183W"/>
<dbReference type="AGR" id="SGD:S000001666"/>
<dbReference type="SGD" id="S000001666">
    <property type="gene designation" value="LOT5"/>
</dbReference>
<dbReference type="VEuPathDB" id="FungiDB:YKL183W"/>
<dbReference type="eggNOG" id="ENOG502RY1I">
    <property type="taxonomic scope" value="Eukaryota"/>
</dbReference>
<dbReference type="HOGENOM" id="CLU_073622_0_0_1"/>
<dbReference type="InParanoid" id="P34234"/>
<dbReference type="OMA" id="NSCIIIW"/>
<dbReference type="OrthoDB" id="19714at2759"/>
<dbReference type="BioCyc" id="YEAST:G3O-31947-MONOMER"/>
<dbReference type="BioGRID-ORCS" id="853652">
    <property type="hits" value="1 hit in 10 CRISPR screens"/>
</dbReference>
<dbReference type="PRO" id="PR:P34234"/>
<dbReference type="Proteomes" id="UP000002311">
    <property type="component" value="Chromosome XI"/>
</dbReference>
<dbReference type="RNAct" id="P34234">
    <property type="molecule type" value="protein"/>
</dbReference>
<dbReference type="GO" id="GO:0005737">
    <property type="term" value="C:cytoplasm"/>
    <property type="evidence" value="ECO:0007005"/>
    <property type="project" value="SGD"/>
</dbReference>
<dbReference type="GO" id="GO:0005829">
    <property type="term" value="C:cytosol"/>
    <property type="evidence" value="ECO:0000318"/>
    <property type="project" value="GO_Central"/>
</dbReference>
<dbReference type="GO" id="GO:0005634">
    <property type="term" value="C:nucleus"/>
    <property type="evidence" value="ECO:0007005"/>
    <property type="project" value="SGD"/>
</dbReference>
<dbReference type="GO" id="GO:0034715">
    <property type="term" value="C:pICln-Sm protein complex"/>
    <property type="evidence" value="ECO:0000318"/>
    <property type="project" value="GO_Central"/>
</dbReference>
<dbReference type="GO" id="GO:0005681">
    <property type="term" value="C:spliceosomal complex"/>
    <property type="evidence" value="ECO:0000318"/>
    <property type="project" value="GO_Central"/>
</dbReference>
<dbReference type="GO" id="GO:0045292">
    <property type="term" value="P:mRNA cis splicing, via spliceosome"/>
    <property type="evidence" value="ECO:0000318"/>
    <property type="project" value="GO_Central"/>
</dbReference>
<dbReference type="GO" id="GO:0000387">
    <property type="term" value="P:spliceosomal snRNP assembly"/>
    <property type="evidence" value="ECO:0000318"/>
    <property type="project" value="GO_Central"/>
</dbReference>
<dbReference type="InterPro" id="IPR039924">
    <property type="entry name" value="ICln/Lot5/Saf5"/>
</dbReference>
<dbReference type="PANTHER" id="PTHR21399">
    <property type="entry name" value="CHLORIDE CONDUCTANCE REGULATORY PROTEIN ICLN"/>
    <property type="match status" value="1"/>
</dbReference>
<dbReference type="PANTHER" id="PTHR21399:SF0">
    <property type="entry name" value="METHYLOSOME SUBUNIT PICLN"/>
    <property type="match status" value="1"/>
</dbReference>
<dbReference type="Pfam" id="PF03517">
    <property type="entry name" value="Voldacs"/>
    <property type="match status" value="1"/>
</dbReference>
<sequence length="306" mass="34326">MMKKKPKCQIARTKPSVENVIPYNQFKKTQPRFNGNFSALNNEEYIILFGGGRDLILGSLTPCSSSHLSNQANPQDTSEYGTDLFILNSCIIIWFNGLGYGLEIPYSSVLYHASRRLPDGREGLQLEILLTLERDEVLDMLYQSLAPQACEFDGEEAHAFTVRSVELTIRPKYSIYDRHYNNEIETLFTFENFGVNRGDDLVNNCNEALAVCMDLHGEDVQDQDQEQYQDPSMAFEGAQDLNATYSGLGDTLHGPPVYQNDGLADDLDGDLVMDNVVSRGGPEASMSMEFYANQNLAGRKNSRDNE</sequence>
<organism>
    <name type="scientific">Saccharomyces cerevisiae (strain ATCC 204508 / S288c)</name>
    <name type="common">Baker's yeast</name>
    <dbReference type="NCBI Taxonomy" id="559292"/>
    <lineage>
        <taxon>Eukaryota</taxon>
        <taxon>Fungi</taxon>
        <taxon>Dikarya</taxon>
        <taxon>Ascomycota</taxon>
        <taxon>Saccharomycotina</taxon>
        <taxon>Saccharomycetes</taxon>
        <taxon>Saccharomycetales</taxon>
        <taxon>Saccharomycetaceae</taxon>
        <taxon>Saccharomyces</taxon>
    </lineage>
</organism>
<evidence type="ECO:0000269" key="1">
    <source>
    </source>
</evidence>
<evidence type="ECO:0000269" key="2">
    <source>
    </source>
</evidence>
<evidence type="ECO:0000269" key="3">
    <source>
    </source>
</evidence>
<evidence type="ECO:0000305" key="4"/>
<feature type="chain" id="PRO_0000203137" description="Protein LOT5">
    <location>
        <begin position="1"/>
        <end position="306"/>
    </location>
</feature>